<organism>
    <name type="scientific">Klebsiella pneumoniae</name>
    <dbReference type="NCBI Taxonomy" id="573"/>
    <lineage>
        <taxon>Bacteria</taxon>
        <taxon>Pseudomonadati</taxon>
        <taxon>Pseudomonadota</taxon>
        <taxon>Gammaproteobacteria</taxon>
        <taxon>Enterobacterales</taxon>
        <taxon>Enterobacteriaceae</taxon>
        <taxon>Klebsiella/Raoultella group</taxon>
        <taxon>Klebsiella</taxon>
        <taxon>Klebsiella pneumoniae complex</taxon>
    </lineage>
</organism>
<dbReference type="EMBL" id="D21242">
    <property type="protein sequence ID" value="BAA04773.1"/>
    <property type="molecule type" value="Genomic_DNA"/>
</dbReference>
<dbReference type="RefSeq" id="WP_004180526.1">
    <property type="nucleotide sequence ID" value="NZ_WXZY01000015.1"/>
</dbReference>
<dbReference type="SMR" id="Q48448"/>
<dbReference type="Gene3D" id="1.20.144.10">
    <property type="entry name" value="Phosphatidic acid phosphatase type 2/haloperoxidase"/>
    <property type="match status" value="1"/>
</dbReference>
<dbReference type="InterPro" id="IPR036938">
    <property type="entry name" value="P_Acid_Pase_2/haloperoxi_sf"/>
</dbReference>
<dbReference type="InterPro" id="IPR000326">
    <property type="entry name" value="P_Acid_Pase_2/haloperoxidase"/>
</dbReference>
<dbReference type="Pfam" id="PF01569">
    <property type="entry name" value="PAP2"/>
    <property type="match status" value="1"/>
</dbReference>
<dbReference type="SMART" id="SM00014">
    <property type="entry name" value="acidPPc"/>
    <property type="match status" value="1"/>
</dbReference>
<dbReference type="SUPFAM" id="SSF48317">
    <property type="entry name" value="Acid phosphatase/Vanadium-dependent haloperoxidase"/>
    <property type="match status" value="1"/>
</dbReference>
<sequence length="209" mass="22492">MNWQLISFFGDSTVLLPSAAALFIVLMLRKTSRLLAWQWSLLFGITGAIVCASKLAFMGWGLGIRELDYTGFSGHSALSAAFWPIFLWLLSARFSVGLRKAAVITGYVLAAVVGYSRLVIHAHSFSEVIAGLLLGAAGSALFLVLQKRTPDPESVHISWGGVACLVMVPLILLHSGSKAPTQSLLGQIATAVGPLDKPFTRTDLHKQAW</sequence>
<proteinExistence type="predicted"/>
<feature type="chain" id="PRO_0000066156" description="Uncharacterized 22.5 kDa protein in cps region">
    <location>
        <begin position="1"/>
        <end position="209"/>
    </location>
</feature>
<reference key="1">
    <citation type="journal article" date="1995" name="J. Bacteriol.">
        <title>Genomic organization of the Klebsiella pneumoniae cps region responsible for serotype K2 capsular polysaccharide synthesis in the virulent strain Chedid.</title>
        <authorList>
            <person name="Arakawa Y."/>
            <person name="Wacharotayankun R."/>
            <person name="Nagatsuka T."/>
            <person name="Ito H."/>
            <person name="Kato N."/>
            <person name="Ohta M."/>
        </authorList>
    </citation>
    <scope>NUCLEOTIDE SEQUENCE [GENOMIC DNA]</scope>
    <source>
        <strain>Chedid</strain>
    </source>
</reference>
<name>YC02_KLEPN</name>
<accession>Q48448</accession>
<protein>
    <recommendedName>
        <fullName>Uncharacterized 22.5 kDa protein in cps region</fullName>
    </recommendedName>
    <alternativeName>
        <fullName>ORF2</fullName>
    </alternativeName>
</protein>